<protein>
    <recommendedName>
        <fullName evidence="1">Small ribosomal subunit protein uS5</fullName>
    </recommendedName>
    <alternativeName>
        <fullName evidence="2">30S ribosomal protein S5</fullName>
    </alternativeName>
</protein>
<evidence type="ECO:0000255" key="1">
    <source>
        <dbReference type="HAMAP-Rule" id="MF_01307"/>
    </source>
</evidence>
<evidence type="ECO:0000305" key="2"/>
<proteinExistence type="inferred from homology"/>
<keyword id="KW-1185">Reference proteome</keyword>
<keyword id="KW-0687">Ribonucleoprotein</keyword>
<keyword id="KW-0689">Ribosomal protein</keyword>
<keyword id="KW-0694">RNA-binding</keyword>
<keyword id="KW-0699">rRNA-binding</keyword>
<comment type="function">
    <text evidence="1">With S4 and S12 plays an important role in translational accuracy.</text>
</comment>
<comment type="subunit">
    <text evidence="1">Part of the 30S ribosomal subunit. Contacts protein S4.</text>
</comment>
<comment type="domain">
    <text>The N-terminal domain interacts with the head of the 30S subunit; the C-terminal domain interacts with the body and contacts protein S4. The interaction surface between S4 and S5 is involved in control of translational fidelity.</text>
</comment>
<comment type="similarity">
    <text evidence="1">Belongs to the universal ribosomal protein uS5 family.</text>
</comment>
<sequence>MRFNIDEWEPKTTIGRMVKEGQITDIDYILDNNLPILEPEIVDALLPDLEEKVLDVKLVQRMHKSGRRARFRATVVVGNRNGYVGVGKGKAKEVGPAIRKAIAQAKKNIIRVKRGCGSWECGCGTPHSIPYKGYGKCGSTAIEILPAPKGVGLVAGDVAKAVLGLAGIKDVWTKTFGETRTTYNFAMATFEALKSLNFTRTMEKHKEKLGIVEGRVL</sequence>
<accession>P54045</accession>
<dbReference type="EMBL" id="L77117">
    <property type="protein sequence ID" value="AAB98464.1"/>
    <property type="molecule type" value="Genomic_DNA"/>
</dbReference>
<dbReference type="PIR" id="C64359">
    <property type="entry name" value="C64359"/>
</dbReference>
<dbReference type="RefSeq" id="WP_010869976.1">
    <property type="nucleotide sequence ID" value="NC_000909.1"/>
</dbReference>
<dbReference type="SMR" id="P54045"/>
<dbReference type="FunCoup" id="P54045">
    <property type="interactions" value="200"/>
</dbReference>
<dbReference type="STRING" id="243232.MJ_0475"/>
<dbReference type="PaxDb" id="243232-MJ_0475"/>
<dbReference type="EnsemblBacteria" id="AAB98464">
    <property type="protein sequence ID" value="AAB98464"/>
    <property type="gene ID" value="MJ_0475"/>
</dbReference>
<dbReference type="GeneID" id="1451337"/>
<dbReference type="KEGG" id="mja:MJ_0475"/>
<dbReference type="eggNOG" id="arCOG04087">
    <property type="taxonomic scope" value="Archaea"/>
</dbReference>
<dbReference type="HOGENOM" id="CLU_065898_0_1_2"/>
<dbReference type="InParanoid" id="P54045"/>
<dbReference type="OrthoDB" id="38155at2157"/>
<dbReference type="PhylomeDB" id="P54045"/>
<dbReference type="Proteomes" id="UP000000805">
    <property type="component" value="Chromosome"/>
</dbReference>
<dbReference type="GO" id="GO:0022627">
    <property type="term" value="C:cytosolic small ribosomal subunit"/>
    <property type="evidence" value="ECO:0000318"/>
    <property type="project" value="GO_Central"/>
</dbReference>
<dbReference type="GO" id="GO:0019843">
    <property type="term" value="F:rRNA binding"/>
    <property type="evidence" value="ECO:0007669"/>
    <property type="project" value="UniProtKB-UniRule"/>
</dbReference>
<dbReference type="GO" id="GO:0003735">
    <property type="term" value="F:structural constituent of ribosome"/>
    <property type="evidence" value="ECO:0000318"/>
    <property type="project" value="GO_Central"/>
</dbReference>
<dbReference type="GO" id="GO:0006412">
    <property type="term" value="P:translation"/>
    <property type="evidence" value="ECO:0000318"/>
    <property type="project" value="GO_Central"/>
</dbReference>
<dbReference type="FunFam" id="3.30.160.20:FF:000002">
    <property type="entry name" value="40S ribosomal protein S2"/>
    <property type="match status" value="1"/>
</dbReference>
<dbReference type="FunFam" id="3.30.230.10:FF:000004">
    <property type="entry name" value="40S ribosomal protein S2"/>
    <property type="match status" value="1"/>
</dbReference>
<dbReference type="Gene3D" id="3.30.160.20">
    <property type="match status" value="1"/>
</dbReference>
<dbReference type="Gene3D" id="3.30.230.10">
    <property type="match status" value="1"/>
</dbReference>
<dbReference type="HAMAP" id="MF_01307_A">
    <property type="entry name" value="Ribosomal_uS5_A"/>
    <property type="match status" value="1"/>
</dbReference>
<dbReference type="InterPro" id="IPR020568">
    <property type="entry name" value="Ribosomal_Su5_D2-typ_SF"/>
</dbReference>
<dbReference type="InterPro" id="IPR000851">
    <property type="entry name" value="Ribosomal_uS5"/>
</dbReference>
<dbReference type="InterPro" id="IPR047866">
    <property type="entry name" value="Ribosomal_uS5_arc"/>
</dbReference>
<dbReference type="InterPro" id="IPR005324">
    <property type="entry name" value="Ribosomal_uS5_C"/>
</dbReference>
<dbReference type="InterPro" id="IPR005711">
    <property type="entry name" value="Ribosomal_uS5_euk/arc"/>
</dbReference>
<dbReference type="InterPro" id="IPR013810">
    <property type="entry name" value="Ribosomal_uS5_N"/>
</dbReference>
<dbReference type="InterPro" id="IPR018192">
    <property type="entry name" value="Ribosomal_uS5_N_CS"/>
</dbReference>
<dbReference type="InterPro" id="IPR014721">
    <property type="entry name" value="Ribsml_uS5_D2-typ_fold_subgr"/>
</dbReference>
<dbReference type="NCBIfam" id="NF003125">
    <property type="entry name" value="PRK04044.1"/>
    <property type="match status" value="1"/>
</dbReference>
<dbReference type="NCBIfam" id="TIGR01020">
    <property type="entry name" value="uS5_euk_arch"/>
    <property type="match status" value="1"/>
</dbReference>
<dbReference type="PANTHER" id="PTHR13718:SF4">
    <property type="entry name" value="40S RIBOSOMAL PROTEIN S2"/>
    <property type="match status" value="1"/>
</dbReference>
<dbReference type="PANTHER" id="PTHR13718">
    <property type="entry name" value="RIBOSOMAL S SUBUNIT"/>
    <property type="match status" value="1"/>
</dbReference>
<dbReference type="Pfam" id="PF00333">
    <property type="entry name" value="Ribosomal_S5"/>
    <property type="match status" value="1"/>
</dbReference>
<dbReference type="Pfam" id="PF03719">
    <property type="entry name" value="Ribosomal_S5_C"/>
    <property type="match status" value="1"/>
</dbReference>
<dbReference type="SUPFAM" id="SSF54768">
    <property type="entry name" value="dsRNA-binding domain-like"/>
    <property type="match status" value="1"/>
</dbReference>
<dbReference type="SUPFAM" id="SSF54211">
    <property type="entry name" value="Ribosomal protein S5 domain 2-like"/>
    <property type="match status" value="1"/>
</dbReference>
<dbReference type="PROSITE" id="PS00585">
    <property type="entry name" value="RIBOSOMAL_S5"/>
    <property type="match status" value="1"/>
</dbReference>
<dbReference type="PROSITE" id="PS50881">
    <property type="entry name" value="S5_DSRBD"/>
    <property type="match status" value="1"/>
</dbReference>
<feature type="chain" id="PRO_0000131648" description="Small ribosomal subunit protein uS5">
    <location>
        <begin position="1"/>
        <end position="217"/>
    </location>
</feature>
<feature type="domain" description="S5 DRBM" evidence="1">
    <location>
        <begin position="49"/>
        <end position="112"/>
    </location>
</feature>
<reference key="1">
    <citation type="journal article" date="1996" name="Science">
        <title>Complete genome sequence of the methanogenic archaeon, Methanococcus jannaschii.</title>
        <authorList>
            <person name="Bult C.J."/>
            <person name="White O."/>
            <person name="Olsen G.J."/>
            <person name="Zhou L."/>
            <person name="Fleischmann R.D."/>
            <person name="Sutton G.G."/>
            <person name="Blake J.A."/>
            <person name="FitzGerald L.M."/>
            <person name="Clayton R.A."/>
            <person name="Gocayne J.D."/>
            <person name="Kerlavage A.R."/>
            <person name="Dougherty B.A."/>
            <person name="Tomb J.-F."/>
            <person name="Adams M.D."/>
            <person name="Reich C.I."/>
            <person name="Overbeek R."/>
            <person name="Kirkness E.F."/>
            <person name="Weinstock K.G."/>
            <person name="Merrick J.M."/>
            <person name="Glodek A."/>
            <person name="Scott J.L."/>
            <person name="Geoghagen N.S.M."/>
            <person name="Weidman J.F."/>
            <person name="Fuhrmann J.L."/>
            <person name="Nguyen D."/>
            <person name="Utterback T.R."/>
            <person name="Kelley J.M."/>
            <person name="Peterson J.D."/>
            <person name="Sadow P.W."/>
            <person name="Hanna M.C."/>
            <person name="Cotton M.D."/>
            <person name="Roberts K.M."/>
            <person name="Hurst M.A."/>
            <person name="Kaine B.P."/>
            <person name="Borodovsky M."/>
            <person name="Klenk H.-P."/>
            <person name="Fraser C.M."/>
            <person name="Smith H.O."/>
            <person name="Woese C.R."/>
            <person name="Venter J.C."/>
        </authorList>
    </citation>
    <scope>NUCLEOTIDE SEQUENCE [LARGE SCALE GENOMIC DNA]</scope>
    <source>
        <strain>ATCC 43067 / DSM 2661 / JAL-1 / JCM 10045 / NBRC 100440</strain>
    </source>
</reference>
<name>RS5_METJA</name>
<gene>
    <name evidence="1" type="primary">rps5</name>
    <name type="ordered locus">MJ0475</name>
</gene>
<organism>
    <name type="scientific">Methanocaldococcus jannaschii (strain ATCC 43067 / DSM 2661 / JAL-1 / JCM 10045 / NBRC 100440)</name>
    <name type="common">Methanococcus jannaschii</name>
    <dbReference type="NCBI Taxonomy" id="243232"/>
    <lineage>
        <taxon>Archaea</taxon>
        <taxon>Methanobacteriati</taxon>
        <taxon>Methanobacteriota</taxon>
        <taxon>Methanomada group</taxon>
        <taxon>Methanococci</taxon>
        <taxon>Methanococcales</taxon>
        <taxon>Methanocaldococcaceae</taxon>
        <taxon>Methanocaldococcus</taxon>
    </lineage>
</organism>